<sequence length="80" mass="9493">MTRLVKALVIAYQRFFSARRPYRVCRFEPTCSEYMLQAIDRYHSRGILMGLARILRCQPFARGGYDPLPDHFTLKRNQPK</sequence>
<comment type="function">
    <text evidence="1">Could be involved in insertion of integral membrane proteins into the membrane.</text>
</comment>
<comment type="subcellular location">
    <subcellularLocation>
        <location evidence="1">Cell membrane</location>
        <topology evidence="1">Peripheral membrane protein</topology>
        <orientation evidence="1">Cytoplasmic side</orientation>
    </subcellularLocation>
</comment>
<comment type="similarity">
    <text evidence="1">Belongs to the UPF0161 family.</text>
</comment>
<organism>
    <name type="scientific">Limosilactobacillus fermentum (strain NBRC 3956 / LMG 18251)</name>
    <name type="common">Lactobacillus fermentum</name>
    <dbReference type="NCBI Taxonomy" id="334390"/>
    <lineage>
        <taxon>Bacteria</taxon>
        <taxon>Bacillati</taxon>
        <taxon>Bacillota</taxon>
        <taxon>Bacilli</taxon>
        <taxon>Lactobacillales</taxon>
        <taxon>Lactobacillaceae</taxon>
        <taxon>Limosilactobacillus</taxon>
    </lineage>
</organism>
<evidence type="ECO:0000255" key="1">
    <source>
        <dbReference type="HAMAP-Rule" id="MF_00386"/>
    </source>
</evidence>
<reference key="1">
    <citation type="journal article" date="2008" name="DNA Res.">
        <title>Comparative genome analysis of Lactobacillus reuteri and Lactobacillus fermentum reveal a genomic island for reuterin and cobalamin production.</title>
        <authorList>
            <person name="Morita H."/>
            <person name="Toh H."/>
            <person name="Fukuda S."/>
            <person name="Horikawa H."/>
            <person name="Oshima K."/>
            <person name="Suzuki T."/>
            <person name="Murakami M."/>
            <person name="Hisamatsu S."/>
            <person name="Kato Y."/>
            <person name="Takizawa T."/>
            <person name="Fukuoka H."/>
            <person name="Yoshimura T."/>
            <person name="Itoh K."/>
            <person name="O'Sullivan D.J."/>
            <person name="McKay L.L."/>
            <person name="Ohno H."/>
            <person name="Kikuchi J."/>
            <person name="Masaoka T."/>
            <person name="Hattori M."/>
        </authorList>
    </citation>
    <scope>NUCLEOTIDE SEQUENCE [LARGE SCALE GENOMIC DNA]</scope>
    <source>
        <strain>NBRC 3956 / LMG 18251</strain>
    </source>
</reference>
<feature type="chain" id="PRO_1000197756" description="Putative membrane protein insertion efficiency factor">
    <location>
        <begin position="1"/>
        <end position="80"/>
    </location>
</feature>
<name>YIDD_LIMF3</name>
<keyword id="KW-1003">Cell membrane</keyword>
<keyword id="KW-0472">Membrane</keyword>
<keyword id="KW-1185">Reference proteome</keyword>
<proteinExistence type="inferred from homology"/>
<protein>
    <recommendedName>
        <fullName evidence="1">Putative membrane protein insertion efficiency factor</fullName>
    </recommendedName>
</protein>
<gene>
    <name type="ordered locus">LAF_0446</name>
</gene>
<dbReference type="EMBL" id="AP008937">
    <property type="protein sequence ID" value="BAG26782.1"/>
    <property type="molecule type" value="Genomic_DNA"/>
</dbReference>
<dbReference type="KEGG" id="lfe:LAF_0446"/>
<dbReference type="eggNOG" id="COG0759">
    <property type="taxonomic scope" value="Bacteria"/>
</dbReference>
<dbReference type="HOGENOM" id="CLU_144811_2_2_9"/>
<dbReference type="Proteomes" id="UP000001697">
    <property type="component" value="Chromosome"/>
</dbReference>
<dbReference type="GO" id="GO:0005886">
    <property type="term" value="C:plasma membrane"/>
    <property type="evidence" value="ECO:0007669"/>
    <property type="project" value="UniProtKB-SubCell"/>
</dbReference>
<dbReference type="HAMAP" id="MF_00386">
    <property type="entry name" value="UPF0161_YidD"/>
    <property type="match status" value="1"/>
</dbReference>
<dbReference type="InterPro" id="IPR002696">
    <property type="entry name" value="Membr_insert_effic_factor_YidD"/>
</dbReference>
<dbReference type="NCBIfam" id="TIGR00278">
    <property type="entry name" value="membrane protein insertion efficiency factor YidD"/>
    <property type="match status" value="1"/>
</dbReference>
<dbReference type="PANTHER" id="PTHR33383">
    <property type="entry name" value="MEMBRANE PROTEIN INSERTION EFFICIENCY FACTOR-RELATED"/>
    <property type="match status" value="1"/>
</dbReference>
<dbReference type="PANTHER" id="PTHR33383:SF1">
    <property type="entry name" value="MEMBRANE PROTEIN INSERTION EFFICIENCY FACTOR-RELATED"/>
    <property type="match status" value="1"/>
</dbReference>
<dbReference type="Pfam" id="PF01809">
    <property type="entry name" value="YidD"/>
    <property type="match status" value="1"/>
</dbReference>
<dbReference type="SMART" id="SM01234">
    <property type="entry name" value="Haemolytic"/>
    <property type="match status" value="1"/>
</dbReference>
<accession>B2GAV0</accession>